<accession>B0U0F0</accession>
<proteinExistence type="inferred from homology"/>
<reference key="1">
    <citation type="submission" date="2007-12" db="EMBL/GenBank/DDBJ databases">
        <title>Complete sequence of chromosome of Francisella philomiragia subsp. philomiragia ATCC 25017.</title>
        <authorList>
            <consortium name="US DOE Joint Genome Institute"/>
            <person name="Copeland A."/>
            <person name="Lucas S."/>
            <person name="Lapidus A."/>
            <person name="Barry K."/>
            <person name="Detter J.C."/>
            <person name="Glavina del Rio T."/>
            <person name="Hammon N."/>
            <person name="Israni S."/>
            <person name="Dalin E."/>
            <person name="Tice H."/>
            <person name="Pitluck S."/>
            <person name="Chain P."/>
            <person name="Malfatti S."/>
            <person name="Shin M."/>
            <person name="Vergez L."/>
            <person name="Schmutz J."/>
            <person name="Larimer F."/>
            <person name="Land M."/>
            <person name="Hauser L."/>
            <person name="Richardson P."/>
        </authorList>
    </citation>
    <scope>NUCLEOTIDE SEQUENCE [LARGE SCALE GENOMIC DNA]</scope>
    <source>
        <strain>ATCC 25017 / CCUG 19701 / FSC 153 / O#319-036</strain>
    </source>
</reference>
<sequence>MFQNHKSEILLATPLIKDDAIFTKSVIYLCQNDRHGAMGLIINKPLSDTLRDVFEELEISHHNTFNEILDYPLYMGGPISPHKIMILHTTNGRNYSSTIKLDEGLAITASMDILEDLANNILPEYFLPVVGYSCWTADQLTDEIKSNDWIVTNKLSKKILFNHENKVKWQNHIEHAGYTLQSLDSLFKNIGNC</sequence>
<comment type="similarity">
    <text evidence="1">Belongs to the UPF0301 (AlgH) family.</text>
</comment>
<protein>
    <recommendedName>
        <fullName evidence="1">UPF0301 protein Fphi_1754</fullName>
    </recommendedName>
</protein>
<organism>
    <name type="scientific">Francisella philomiragia subsp. philomiragia (strain ATCC 25017 / CCUG 19701 / FSC 153 / O#319-036)</name>
    <dbReference type="NCBI Taxonomy" id="484022"/>
    <lineage>
        <taxon>Bacteria</taxon>
        <taxon>Pseudomonadati</taxon>
        <taxon>Pseudomonadota</taxon>
        <taxon>Gammaproteobacteria</taxon>
        <taxon>Thiotrichales</taxon>
        <taxon>Francisellaceae</taxon>
        <taxon>Francisella</taxon>
    </lineage>
</organism>
<name>Y1759_FRAP2</name>
<gene>
    <name type="ordered locus">Fphi_1754</name>
</gene>
<dbReference type="EMBL" id="CP000937">
    <property type="protein sequence ID" value="ABZ87980.1"/>
    <property type="molecule type" value="Genomic_DNA"/>
</dbReference>
<dbReference type="SMR" id="B0U0F0"/>
<dbReference type="KEGG" id="fph:Fphi_1754"/>
<dbReference type="eggNOG" id="COG1678">
    <property type="taxonomic scope" value="Bacteria"/>
</dbReference>
<dbReference type="HOGENOM" id="CLU_057596_1_0_6"/>
<dbReference type="GO" id="GO:0005829">
    <property type="term" value="C:cytosol"/>
    <property type="evidence" value="ECO:0007669"/>
    <property type="project" value="TreeGrafter"/>
</dbReference>
<dbReference type="Gene3D" id="3.40.1740.10">
    <property type="entry name" value="VC0467-like"/>
    <property type="match status" value="1"/>
</dbReference>
<dbReference type="Gene3D" id="3.30.70.1300">
    <property type="entry name" value="VC0467-like domains"/>
    <property type="match status" value="1"/>
</dbReference>
<dbReference type="HAMAP" id="MF_00758">
    <property type="entry name" value="UPF0301"/>
    <property type="match status" value="1"/>
</dbReference>
<dbReference type="InterPro" id="IPR003774">
    <property type="entry name" value="AlgH-like"/>
</dbReference>
<dbReference type="PANTHER" id="PTHR30327">
    <property type="entry name" value="UNCHARACTERIZED PROTEIN YQGE"/>
    <property type="match status" value="1"/>
</dbReference>
<dbReference type="PANTHER" id="PTHR30327:SF1">
    <property type="entry name" value="UPF0301 PROTEIN YQGE"/>
    <property type="match status" value="1"/>
</dbReference>
<dbReference type="Pfam" id="PF02622">
    <property type="entry name" value="DUF179"/>
    <property type="match status" value="1"/>
</dbReference>
<dbReference type="SUPFAM" id="SSF143456">
    <property type="entry name" value="VC0467-like"/>
    <property type="match status" value="1"/>
</dbReference>
<feature type="chain" id="PRO_1000083510" description="UPF0301 protein Fphi_1754">
    <location>
        <begin position="1"/>
        <end position="193"/>
    </location>
</feature>
<evidence type="ECO:0000255" key="1">
    <source>
        <dbReference type="HAMAP-Rule" id="MF_00758"/>
    </source>
</evidence>